<reference key="1">
    <citation type="journal article" date="2000" name="Plant Physiol.">
        <title>Plasma membrane intrinsic proteins from maize cluster in two sequence subgroups with differential aquaporin activity.</title>
        <authorList>
            <person name="Chaumont F."/>
            <person name="Barrieu F."/>
            <person name="Jung R."/>
            <person name="Chrispeels M.J."/>
        </authorList>
    </citation>
    <scope>NUCLEOTIDE SEQUENCE [MRNA]</scope>
    <scope>SUBCELLULAR LOCATION</scope>
    <scope>TISSUE SPECIFICITY</scope>
    <source>
        <strain>cv. Ohio 43</strain>
        <tissue>Seed</tissue>
    </source>
</reference>
<reference key="2">
    <citation type="journal article" date="2001" name="Plant Physiol.">
        <title>Aquaporins constitute a large and highly divergent protein family in maize.</title>
        <authorList>
            <person name="Chaumont F."/>
            <person name="Barrieu F."/>
            <person name="Wojcik E."/>
            <person name="Chrispeels M.J."/>
            <person name="Jung R."/>
        </authorList>
    </citation>
    <scope>GENE FAMILY</scope>
    <scope>NOMENCLATURE</scope>
</reference>
<reference key="3">
    <citation type="journal article" date="2002" name="Planta">
        <title>Sensitivity of cell hydraulic conductivity to mercury is coincident with symplasmic isolation and expression of plasmalemma aquaporin genes in growing maize roots.</title>
        <authorList>
            <person name="Hukin D."/>
            <person name="Doering-Saad C."/>
            <person name="Thomas C.R."/>
            <person name="Pritchard J."/>
        </authorList>
    </citation>
    <scope>TISSUE SPECIFICITY</scope>
</reference>
<reference key="4">
    <citation type="journal article" date="2004" name="Plant Cell">
        <title>Interactions between plasma membrane aquaporins modulate their water channel activity.</title>
        <authorList>
            <person name="Fetter K."/>
            <person name="van Wilder V."/>
            <person name="Moshelion M."/>
            <person name="Chaumont F."/>
        </authorList>
    </citation>
    <scope>FUNCTION</scope>
    <scope>SUBUNIT</scope>
    <scope>SUBCELLULAR LOCATION</scope>
    <scope>TISSUE SPECIFICITY</scope>
    <scope>INTERACTION WITH PIP2-1</scope>
</reference>
<gene>
    <name type="primary">PIP1-2</name>
</gene>
<keyword id="KW-1003">Cell membrane</keyword>
<keyword id="KW-0472">Membrane</keyword>
<keyword id="KW-1185">Reference proteome</keyword>
<keyword id="KW-0677">Repeat</keyword>
<keyword id="KW-0812">Transmembrane</keyword>
<keyword id="KW-1133">Transmembrane helix</keyword>
<keyword id="KW-0813">Transport</keyword>
<proteinExistence type="evidence at protein level"/>
<comment type="function">
    <text evidence="6">Water channel required to facilitate the transport of water across cell membrane. Active as heteromers with PIP1-1, PIP2-1, PIP2-4 or PIP2-5, but not as homomers.</text>
</comment>
<comment type="subunit">
    <text evidence="6">Interacts with PIP2-1 to form heteromers.</text>
</comment>
<comment type="subcellular location">
    <subcellularLocation>
        <location evidence="4 6">Cell membrane</location>
        <topology evidence="4 6">Multi-pass membrane protein</topology>
    </subcellularLocation>
</comment>
<comment type="tissue specificity">
    <text evidence="4 5 6">Highly expressed in developing tassels and at lower levels in roots, shoots, ears and embryos. Expressed in the root growing zone at 5-6 mm from the root tip. Expressed in xylem parenchyma.</text>
</comment>
<comment type="domain">
    <text>Aquaporins contain two tandem repeats each containing three membrane-spanning domains and a pore-forming loop with the signature motif Asn-Pro-Ala (NPA).</text>
</comment>
<comment type="similarity">
    <text evidence="7">Belongs to the MIP/aquaporin (TC 1.A.8) family. PIP (TC 1.A.8.11) subfamily.</text>
</comment>
<name>PIP12_MAIZE</name>
<feature type="chain" id="PRO_0000286014" description="Aquaporin PIP1-2">
    <location>
        <begin position="1"/>
        <end position="289"/>
    </location>
</feature>
<feature type="transmembrane region" description="Helical; Name=1" evidence="2">
    <location>
        <begin position="58"/>
        <end position="78"/>
    </location>
</feature>
<feature type="transmembrane region" description="Helical; Name=2" evidence="2">
    <location>
        <begin position="93"/>
        <end position="115"/>
    </location>
</feature>
<feature type="transmembrane region" description="Helical; Name=3" evidence="2">
    <location>
        <begin position="136"/>
        <end position="156"/>
    </location>
</feature>
<feature type="transmembrane region" description="Helical; Name=4" evidence="2">
    <location>
        <begin position="178"/>
        <end position="198"/>
    </location>
</feature>
<feature type="transmembrane region" description="Helical; Name=5" evidence="2">
    <location>
        <begin position="212"/>
        <end position="232"/>
    </location>
</feature>
<feature type="transmembrane region" description="Helical; Name=6" evidence="2">
    <location>
        <begin position="260"/>
        <end position="280"/>
    </location>
</feature>
<feature type="region of interest" description="Disordered" evidence="3">
    <location>
        <begin position="1"/>
        <end position="36"/>
    </location>
</feature>
<feature type="short sequence motif" description="NPA 1" evidence="1">
    <location>
        <begin position="117"/>
        <end position="119"/>
    </location>
</feature>
<feature type="short sequence motif" description="NPA 2" evidence="1">
    <location>
        <begin position="238"/>
        <end position="240"/>
    </location>
</feature>
<accession>Q9XF59</accession>
<sequence>MEGKEEDVRLGANKFSERQPIGTAAQGAADDKDYKEPPPAPLFEPGELKSWSFYRAGIAEFVATFLFLYITILTVMGVSKSTSKCATVGIQGIAWSFGGMIFALVYCTAGISGGHINPAVTFGLFLARKLSLTRALFYIIMQCLGAVCGAGVVKGFQQGLYMGNGGGANVVAPGYTKGDGLGAEIVGTFILVYTVFSATDAKRNARDSHVPILAPLPIGFAVFLVHLATIPITGTGINPARSLGAAIIYNRDHAWNDHWIFWVGPFIGAALAAIYHQVIIRAIPFKSRS</sequence>
<organism>
    <name type="scientific">Zea mays</name>
    <name type="common">Maize</name>
    <dbReference type="NCBI Taxonomy" id="4577"/>
    <lineage>
        <taxon>Eukaryota</taxon>
        <taxon>Viridiplantae</taxon>
        <taxon>Streptophyta</taxon>
        <taxon>Embryophyta</taxon>
        <taxon>Tracheophyta</taxon>
        <taxon>Spermatophyta</taxon>
        <taxon>Magnoliopsida</taxon>
        <taxon>Liliopsida</taxon>
        <taxon>Poales</taxon>
        <taxon>Poaceae</taxon>
        <taxon>PACMAD clade</taxon>
        <taxon>Panicoideae</taxon>
        <taxon>Andropogonodae</taxon>
        <taxon>Andropogoneae</taxon>
        <taxon>Tripsacinae</taxon>
        <taxon>Zea</taxon>
    </lineage>
</organism>
<dbReference type="EMBL" id="AF131201">
    <property type="protein sequence ID" value="AAD29676.1"/>
    <property type="molecule type" value="mRNA"/>
</dbReference>
<dbReference type="RefSeq" id="NP_001104934.1">
    <property type="nucleotide sequence ID" value="NM_001111464.1"/>
</dbReference>
<dbReference type="SMR" id="Q9XF59"/>
<dbReference type="FunCoup" id="Q9XF59">
    <property type="interactions" value="436"/>
</dbReference>
<dbReference type="STRING" id="4577.Q9XF59"/>
<dbReference type="PaxDb" id="4577-AC209208.3_FGP002"/>
<dbReference type="GeneID" id="541779"/>
<dbReference type="KEGG" id="zma:541779"/>
<dbReference type="eggNOG" id="KOG0223">
    <property type="taxonomic scope" value="Eukaryota"/>
</dbReference>
<dbReference type="InParanoid" id="Q9XF59"/>
<dbReference type="OrthoDB" id="3222at2759"/>
<dbReference type="Proteomes" id="UP000007305">
    <property type="component" value="Unplaced"/>
</dbReference>
<dbReference type="ExpressionAtlas" id="Q9XF59">
    <property type="expression patterns" value="baseline and differential"/>
</dbReference>
<dbReference type="GO" id="GO:0005829">
    <property type="term" value="C:cytosol"/>
    <property type="evidence" value="ECO:0000314"/>
    <property type="project" value="AgBase"/>
</dbReference>
<dbReference type="GO" id="GO:0005783">
    <property type="term" value="C:endoplasmic reticulum"/>
    <property type="evidence" value="ECO:0000314"/>
    <property type="project" value="AgBase"/>
</dbReference>
<dbReference type="GO" id="GO:0005886">
    <property type="term" value="C:plasma membrane"/>
    <property type="evidence" value="ECO:0000314"/>
    <property type="project" value="AgBase"/>
</dbReference>
<dbReference type="GO" id="GO:0032991">
    <property type="term" value="C:protein-containing complex"/>
    <property type="evidence" value="ECO:0000353"/>
    <property type="project" value="AgBase"/>
</dbReference>
<dbReference type="GO" id="GO:0015250">
    <property type="term" value="F:water channel activity"/>
    <property type="evidence" value="ECO:0000318"/>
    <property type="project" value="GO_Central"/>
</dbReference>
<dbReference type="GO" id="GO:0051290">
    <property type="term" value="P:protein heterotetramerization"/>
    <property type="evidence" value="ECO:0000304"/>
    <property type="project" value="AgBase"/>
</dbReference>
<dbReference type="GO" id="GO:0051289">
    <property type="term" value="P:protein homotetramerization"/>
    <property type="evidence" value="ECO:0000304"/>
    <property type="project" value="AgBase"/>
</dbReference>
<dbReference type="GO" id="GO:0009414">
    <property type="term" value="P:response to water deprivation"/>
    <property type="evidence" value="ECO:0000318"/>
    <property type="project" value="GO_Central"/>
</dbReference>
<dbReference type="CDD" id="cd00333">
    <property type="entry name" value="MIP"/>
    <property type="match status" value="1"/>
</dbReference>
<dbReference type="FunFam" id="1.20.1080.10:FF:000001">
    <property type="entry name" value="Probable aquaporin PIP1-2"/>
    <property type="match status" value="1"/>
</dbReference>
<dbReference type="Gene3D" id="1.20.1080.10">
    <property type="entry name" value="Glycerol uptake facilitator protein"/>
    <property type="match status" value="1"/>
</dbReference>
<dbReference type="InterPro" id="IPR023271">
    <property type="entry name" value="Aquaporin-like"/>
</dbReference>
<dbReference type="InterPro" id="IPR034294">
    <property type="entry name" value="Aquaporin_transptr"/>
</dbReference>
<dbReference type="InterPro" id="IPR000425">
    <property type="entry name" value="MIP"/>
</dbReference>
<dbReference type="InterPro" id="IPR022357">
    <property type="entry name" value="MIP_CS"/>
</dbReference>
<dbReference type="NCBIfam" id="TIGR00861">
    <property type="entry name" value="MIP"/>
    <property type="match status" value="1"/>
</dbReference>
<dbReference type="PANTHER" id="PTHR45687">
    <property type="entry name" value="AQUAPORIN OR AQUAGLYCEROPORIN RELATED"/>
    <property type="match status" value="1"/>
</dbReference>
<dbReference type="Pfam" id="PF00230">
    <property type="entry name" value="MIP"/>
    <property type="match status" value="1"/>
</dbReference>
<dbReference type="PRINTS" id="PR00783">
    <property type="entry name" value="MINTRINSICP"/>
</dbReference>
<dbReference type="SUPFAM" id="SSF81338">
    <property type="entry name" value="Aquaporin-like"/>
    <property type="match status" value="1"/>
</dbReference>
<dbReference type="PROSITE" id="PS00221">
    <property type="entry name" value="MIP"/>
    <property type="match status" value="1"/>
</dbReference>
<protein>
    <recommendedName>
        <fullName>Aquaporin PIP1-2</fullName>
    </recommendedName>
    <alternativeName>
        <fullName>Plasma membrane intrinsic protein 1-2</fullName>
    </alternativeName>
    <alternativeName>
        <fullName>ZmPIP1-2</fullName>
    </alternativeName>
    <alternativeName>
        <fullName>ZmPIP1;2</fullName>
    </alternativeName>
    <alternativeName>
        <fullName>ZmPIP1b</fullName>
    </alternativeName>
</protein>
<evidence type="ECO:0000250" key="1"/>
<evidence type="ECO:0000255" key="2"/>
<evidence type="ECO:0000256" key="3">
    <source>
        <dbReference type="SAM" id="MobiDB-lite"/>
    </source>
</evidence>
<evidence type="ECO:0000269" key="4">
    <source>
    </source>
</evidence>
<evidence type="ECO:0000269" key="5">
    <source>
    </source>
</evidence>
<evidence type="ECO:0000269" key="6">
    <source>
    </source>
</evidence>
<evidence type="ECO:0000305" key="7"/>